<accession>B5YXP9</accession>
<reference key="1">
    <citation type="journal article" date="2011" name="Proc. Natl. Acad. Sci. U.S.A.">
        <title>Genomic anatomy of Escherichia coli O157:H7 outbreaks.</title>
        <authorList>
            <person name="Eppinger M."/>
            <person name="Mammel M.K."/>
            <person name="Leclerc J.E."/>
            <person name="Ravel J."/>
            <person name="Cebula T.A."/>
        </authorList>
    </citation>
    <scope>NUCLEOTIDE SEQUENCE [LARGE SCALE GENOMIC DNA]</scope>
    <source>
        <strain>EC4115 / EHEC</strain>
    </source>
</reference>
<protein>
    <recommendedName>
        <fullName evidence="1">Probable 4-deoxy-4-formamido-L-arabinose-phosphoundecaprenol deformylase ArnD</fullName>
        <ecNumber evidence="1">3.5.1.n3</ecNumber>
    </recommendedName>
</protein>
<proteinExistence type="inferred from homology"/>
<dbReference type="EC" id="3.5.1.n3" evidence="1"/>
<dbReference type="EMBL" id="CP001164">
    <property type="protein sequence ID" value="ACI38416.1"/>
    <property type="molecule type" value="Genomic_DNA"/>
</dbReference>
<dbReference type="RefSeq" id="WP_000169742.1">
    <property type="nucleotide sequence ID" value="NC_011353.1"/>
</dbReference>
<dbReference type="SMR" id="B5YXP9"/>
<dbReference type="KEGG" id="ecf:ECH74115_3397"/>
<dbReference type="HOGENOM" id="CLU_084199_0_0_6"/>
<dbReference type="UniPathway" id="UPA00030"/>
<dbReference type="UniPathway" id="UPA00036">
    <property type="reaction ID" value="UER00496"/>
</dbReference>
<dbReference type="GO" id="GO:0016020">
    <property type="term" value="C:membrane"/>
    <property type="evidence" value="ECO:0007669"/>
    <property type="project" value="GOC"/>
</dbReference>
<dbReference type="GO" id="GO:0016811">
    <property type="term" value="F:hydrolase activity, acting on carbon-nitrogen (but not peptide) bonds, in linear amides"/>
    <property type="evidence" value="ECO:0007669"/>
    <property type="project" value="UniProtKB-UniRule"/>
</dbReference>
<dbReference type="GO" id="GO:0036108">
    <property type="term" value="P:4-amino-4-deoxy-alpha-L-arabinopyranosyl undecaprenyl phosphate biosynthetic process"/>
    <property type="evidence" value="ECO:0007669"/>
    <property type="project" value="UniProtKB-UniRule"/>
</dbReference>
<dbReference type="GO" id="GO:0009245">
    <property type="term" value="P:lipid A biosynthetic process"/>
    <property type="evidence" value="ECO:0007669"/>
    <property type="project" value="UniProtKB-UniRule"/>
</dbReference>
<dbReference type="GO" id="GO:0009103">
    <property type="term" value="P:lipopolysaccharide biosynthetic process"/>
    <property type="evidence" value="ECO:0007669"/>
    <property type="project" value="UniProtKB-UniRule"/>
</dbReference>
<dbReference type="GO" id="GO:0046677">
    <property type="term" value="P:response to antibiotic"/>
    <property type="evidence" value="ECO:0007669"/>
    <property type="project" value="UniProtKB-KW"/>
</dbReference>
<dbReference type="CDD" id="cd10939">
    <property type="entry name" value="CE4_ArnD"/>
    <property type="match status" value="1"/>
</dbReference>
<dbReference type="Gene3D" id="3.20.20.370">
    <property type="entry name" value="Glycoside hydrolase/deacetylase"/>
    <property type="match status" value="1"/>
</dbReference>
<dbReference type="HAMAP" id="MF_01870">
    <property type="entry name" value="ArnD"/>
    <property type="match status" value="1"/>
</dbReference>
<dbReference type="InterPro" id="IPR023557">
    <property type="entry name" value="ArnD"/>
</dbReference>
<dbReference type="InterPro" id="IPR011330">
    <property type="entry name" value="Glyco_hydro/deAcase_b/a-brl"/>
</dbReference>
<dbReference type="InterPro" id="IPR002509">
    <property type="entry name" value="NODB_dom"/>
</dbReference>
<dbReference type="InterPro" id="IPR050248">
    <property type="entry name" value="Polysacc_deacetylase_ArnD"/>
</dbReference>
<dbReference type="NCBIfam" id="NF011923">
    <property type="entry name" value="PRK15394.1"/>
    <property type="match status" value="1"/>
</dbReference>
<dbReference type="PANTHER" id="PTHR10587:SF137">
    <property type="entry name" value="4-DEOXY-4-FORMAMIDO-L-ARABINOSE-PHOSPHOUNDECAPRENOL DEFORMYLASE ARND-RELATED"/>
    <property type="match status" value="1"/>
</dbReference>
<dbReference type="PANTHER" id="PTHR10587">
    <property type="entry name" value="GLYCOSYL TRANSFERASE-RELATED"/>
    <property type="match status" value="1"/>
</dbReference>
<dbReference type="Pfam" id="PF01522">
    <property type="entry name" value="Polysacc_deac_1"/>
    <property type="match status" value="1"/>
</dbReference>
<dbReference type="SUPFAM" id="SSF88713">
    <property type="entry name" value="Glycoside hydrolase/deacetylase"/>
    <property type="match status" value="1"/>
</dbReference>
<dbReference type="PROSITE" id="PS51677">
    <property type="entry name" value="NODB"/>
    <property type="match status" value="1"/>
</dbReference>
<feature type="chain" id="PRO_0000383504" description="Probable 4-deoxy-4-formamido-L-arabinose-phosphoundecaprenol deformylase ArnD">
    <location>
        <begin position="1"/>
        <end position="296"/>
    </location>
</feature>
<feature type="domain" description="NodB homology" evidence="1">
    <location>
        <begin position="2"/>
        <end position="260"/>
    </location>
</feature>
<keyword id="KW-0046">Antibiotic resistance</keyword>
<keyword id="KW-0378">Hydrolase</keyword>
<keyword id="KW-0441">Lipid A biosynthesis</keyword>
<keyword id="KW-0444">Lipid biosynthesis</keyword>
<keyword id="KW-0443">Lipid metabolism</keyword>
<keyword id="KW-0448">Lipopolysaccharide biosynthesis</keyword>
<name>ARND_ECO5E</name>
<comment type="function">
    <text evidence="1">Catalyzes the deformylation of 4-deoxy-4-formamido-L-arabinose-phosphoundecaprenol to 4-amino-4-deoxy-L-arabinose-phosphoundecaprenol. The modified arabinose is attached to lipid A and is required for resistance to polymyxin and cationic antimicrobial peptides.</text>
</comment>
<comment type="catalytic activity">
    <reaction evidence="1">
        <text>4-deoxy-4-formamido-alpha-L-arabinopyranosyl di-trans,octa-cis-undecaprenyl phosphate + H2O = 4-amino-4-deoxy-alpha-L-arabinopyranosyl di-trans,octa-cis-undecaprenyl phosphate + formate</text>
        <dbReference type="Rhea" id="RHEA:27734"/>
        <dbReference type="ChEBI" id="CHEBI:15377"/>
        <dbReference type="ChEBI" id="CHEBI:15740"/>
        <dbReference type="ChEBI" id="CHEBI:58909"/>
        <dbReference type="ChEBI" id="CHEBI:60463"/>
        <dbReference type="EC" id="3.5.1.n3"/>
    </reaction>
</comment>
<comment type="pathway">
    <text evidence="1">Glycolipid biosynthesis; 4-amino-4-deoxy-alpha-L-arabinose undecaprenyl phosphate biosynthesis; 4-amino-4-deoxy-alpha-L-arabinose undecaprenyl phosphate from UDP-4-deoxy-4-formamido-beta-L-arabinose and undecaprenyl phosphate: step 2/2.</text>
</comment>
<comment type="pathway">
    <text evidence="1">Bacterial outer membrane biogenesis; lipopolysaccharide biosynthesis.</text>
</comment>
<comment type="similarity">
    <text evidence="1">Belongs to the polysaccharide deacetylase family. ArnD deformylase subfamily.</text>
</comment>
<gene>
    <name evidence="1" type="primary">arnD</name>
    <name type="ordered locus">ECH74115_3397</name>
</gene>
<evidence type="ECO:0000255" key="1">
    <source>
        <dbReference type="HAMAP-Rule" id="MF_01870"/>
    </source>
</evidence>
<organism>
    <name type="scientific">Escherichia coli O157:H7 (strain EC4115 / EHEC)</name>
    <dbReference type="NCBI Taxonomy" id="444450"/>
    <lineage>
        <taxon>Bacteria</taxon>
        <taxon>Pseudomonadati</taxon>
        <taxon>Pseudomonadota</taxon>
        <taxon>Gammaproteobacteria</taxon>
        <taxon>Enterobacterales</taxon>
        <taxon>Enterobacteriaceae</taxon>
        <taxon>Escherichia</taxon>
    </lineage>
</organism>
<sequence>MTKVGLRIDVDTFRGTREGVPRLLEILSKHNIQASIFFSVGPDNMGRHLWRLVKPQFLWKMLRSNAASLYGWDILLAGTAWPGKEIGHANADIIREAAKYHEVGLHAWDHHAWQARSGNWDRQTMIDDIARGLRTLEEIIGQPVTCSAAAGWRADQQVIEAKEAFHLRYNSDCRGAMPFRPLLESGNPGTAQIPVTLPTWDEVIGRDVKAEDFNGWLLNRILRDKGTPVYTIHAEVEGCAYQHNFVDLLKRAAQEGVTFCPLSELLSETLPLGQVVRGNIAGREGWLGCQQIAGSR</sequence>